<reference key="1">
    <citation type="journal article" date="2004" name="Nat. Biotechnol.">
        <title>The genome sequence of the capnophilic rumen bacterium Mannheimia succiniciproducens.</title>
        <authorList>
            <person name="Hong S.H."/>
            <person name="Kim J.S."/>
            <person name="Lee S.Y."/>
            <person name="In Y.H."/>
            <person name="Choi S.S."/>
            <person name="Rih J.-K."/>
            <person name="Kim C.H."/>
            <person name="Jeong H."/>
            <person name="Hur C.G."/>
            <person name="Kim J.J."/>
        </authorList>
    </citation>
    <scope>NUCLEOTIDE SEQUENCE [LARGE SCALE GENOMIC DNA]</scope>
    <source>
        <strain>KCTC 0769BP / MBEL55E</strain>
    </source>
</reference>
<evidence type="ECO:0000255" key="1">
    <source>
        <dbReference type="HAMAP-Rule" id="MF_00096"/>
    </source>
</evidence>
<proteinExistence type="inferred from homology"/>
<comment type="function">
    <text evidence="1">This protein is involved in the repair of mismatches in DNA. It is possible that it carries out the mismatch recognition step. This protein has a weak ATPase activity.</text>
</comment>
<comment type="similarity">
    <text evidence="1">Belongs to the DNA mismatch repair MutS family.</text>
</comment>
<name>MUTS_MANSM</name>
<feature type="chain" id="PRO_0000224382" description="DNA mismatch repair protein MutS">
    <location>
        <begin position="1"/>
        <end position="861"/>
    </location>
</feature>
<feature type="binding site" evidence="1">
    <location>
        <begin position="614"/>
        <end position="621"/>
    </location>
    <ligand>
        <name>ATP</name>
        <dbReference type="ChEBI" id="CHEBI:30616"/>
    </ligand>
</feature>
<dbReference type="EMBL" id="AE016827">
    <property type="protein sequence ID" value="AAU38851.1"/>
    <property type="molecule type" value="Genomic_DNA"/>
</dbReference>
<dbReference type="SMR" id="Q65QA9"/>
<dbReference type="STRING" id="221988.MS2244"/>
<dbReference type="KEGG" id="msu:MS2244"/>
<dbReference type="eggNOG" id="COG0249">
    <property type="taxonomic scope" value="Bacteria"/>
</dbReference>
<dbReference type="HOGENOM" id="CLU_002472_4_0_6"/>
<dbReference type="Proteomes" id="UP000000607">
    <property type="component" value="Chromosome"/>
</dbReference>
<dbReference type="GO" id="GO:0005829">
    <property type="term" value="C:cytosol"/>
    <property type="evidence" value="ECO:0007669"/>
    <property type="project" value="TreeGrafter"/>
</dbReference>
<dbReference type="GO" id="GO:0005524">
    <property type="term" value="F:ATP binding"/>
    <property type="evidence" value="ECO:0007669"/>
    <property type="project" value="UniProtKB-UniRule"/>
</dbReference>
<dbReference type="GO" id="GO:0140664">
    <property type="term" value="F:ATP-dependent DNA damage sensor activity"/>
    <property type="evidence" value="ECO:0007669"/>
    <property type="project" value="InterPro"/>
</dbReference>
<dbReference type="GO" id="GO:0003684">
    <property type="term" value="F:damaged DNA binding"/>
    <property type="evidence" value="ECO:0007669"/>
    <property type="project" value="UniProtKB-UniRule"/>
</dbReference>
<dbReference type="GO" id="GO:0030983">
    <property type="term" value="F:mismatched DNA binding"/>
    <property type="evidence" value="ECO:0007669"/>
    <property type="project" value="InterPro"/>
</dbReference>
<dbReference type="GO" id="GO:0006298">
    <property type="term" value="P:mismatch repair"/>
    <property type="evidence" value="ECO:0007669"/>
    <property type="project" value="UniProtKB-UniRule"/>
</dbReference>
<dbReference type="CDD" id="cd03284">
    <property type="entry name" value="ABC_MutS1"/>
    <property type="match status" value="1"/>
</dbReference>
<dbReference type="FunFam" id="1.10.1420.10:FF:000002">
    <property type="entry name" value="DNA mismatch repair protein MutS"/>
    <property type="match status" value="1"/>
</dbReference>
<dbReference type="FunFam" id="3.30.420.110:FF:000001">
    <property type="entry name" value="DNA mismatch repair protein MutS"/>
    <property type="match status" value="1"/>
</dbReference>
<dbReference type="FunFam" id="3.40.1170.10:FF:000001">
    <property type="entry name" value="DNA mismatch repair protein MutS"/>
    <property type="match status" value="1"/>
</dbReference>
<dbReference type="FunFam" id="3.40.50.300:FF:000283">
    <property type="entry name" value="DNA mismatch repair protein MutS"/>
    <property type="match status" value="1"/>
</dbReference>
<dbReference type="Gene3D" id="1.10.1420.10">
    <property type="match status" value="2"/>
</dbReference>
<dbReference type="Gene3D" id="6.10.140.430">
    <property type="match status" value="1"/>
</dbReference>
<dbReference type="Gene3D" id="3.40.1170.10">
    <property type="entry name" value="DNA repair protein MutS, domain I"/>
    <property type="match status" value="1"/>
</dbReference>
<dbReference type="Gene3D" id="3.30.420.110">
    <property type="entry name" value="MutS, connector domain"/>
    <property type="match status" value="1"/>
</dbReference>
<dbReference type="Gene3D" id="3.40.50.300">
    <property type="entry name" value="P-loop containing nucleotide triphosphate hydrolases"/>
    <property type="match status" value="1"/>
</dbReference>
<dbReference type="HAMAP" id="MF_00096">
    <property type="entry name" value="MutS"/>
    <property type="match status" value="1"/>
</dbReference>
<dbReference type="InterPro" id="IPR005748">
    <property type="entry name" value="DNA_mismatch_repair_MutS"/>
</dbReference>
<dbReference type="InterPro" id="IPR007695">
    <property type="entry name" value="DNA_mismatch_repair_MutS-lik_N"/>
</dbReference>
<dbReference type="InterPro" id="IPR017261">
    <property type="entry name" value="DNA_mismatch_repair_MutS/MSH"/>
</dbReference>
<dbReference type="InterPro" id="IPR000432">
    <property type="entry name" value="DNA_mismatch_repair_MutS_C"/>
</dbReference>
<dbReference type="InterPro" id="IPR007861">
    <property type="entry name" value="DNA_mismatch_repair_MutS_clamp"/>
</dbReference>
<dbReference type="InterPro" id="IPR007696">
    <property type="entry name" value="DNA_mismatch_repair_MutS_core"/>
</dbReference>
<dbReference type="InterPro" id="IPR016151">
    <property type="entry name" value="DNA_mismatch_repair_MutS_N"/>
</dbReference>
<dbReference type="InterPro" id="IPR036187">
    <property type="entry name" value="DNA_mismatch_repair_MutS_sf"/>
</dbReference>
<dbReference type="InterPro" id="IPR007860">
    <property type="entry name" value="DNA_mmatch_repair_MutS_con_dom"/>
</dbReference>
<dbReference type="InterPro" id="IPR045076">
    <property type="entry name" value="MutS"/>
</dbReference>
<dbReference type="InterPro" id="IPR036678">
    <property type="entry name" value="MutS_con_dom_sf"/>
</dbReference>
<dbReference type="InterPro" id="IPR027417">
    <property type="entry name" value="P-loop_NTPase"/>
</dbReference>
<dbReference type="NCBIfam" id="TIGR01070">
    <property type="entry name" value="mutS1"/>
    <property type="match status" value="1"/>
</dbReference>
<dbReference type="NCBIfam" id="NF003810">
    <property type="entry name" value="PRK05399.1"/>
    <property type="match status" value="1"/>
</dbReference>
<dbReference type="PANTHER" id="PTHR11361:SF34">
    <property type="entry name" value="DNA MISMATCH REPAIR PROTEIN MSH1, MITOCHONDRIAL"/>
    <property type="match status" value="1"/>
</dbReference>
<dbReference type="PANTHER" id="PTHR11361">
    <property type="entry name" value="DNA MISMATCH REPAIR PROTEIN MUTS FAMILY MEMBER"/>
    <property type="match status" value="1"/>
</dbReference>
<dbReference type="Pfam" id="PF01624">
    <property type="entry name" value="MutS_I"/>
    <property type="match status" value="1"/>
</dbReference>
<dbReference type="Pfam" id="PF05188">
    <property type="entry name" value="MutS_II"/>
    <property type="match status" value="1"/>
</dbReference>
<dbReference type="Pfam" id="PF05192">
    <property type="entry name" value="MutS_III"/>
    <property type="match status" value="1"/>
</dbReference>
<dbReference type="Pfam" id="PF05190">
    <property type="entry name" value="MutS_IV"/>
    <property type="match status" value="1"/>
</dbReference>
<dbReference type="Pfam" id="PF00488">
    <property type="entry name" value="MutS_V"/>
    <property type="match status" value="1"/>
</dbReference>
<dbReference type="PIRSF" id="PIRSF037677">
    <property type="entry name" value="DNA_mis_repair_Msh6"/>
    <property type="match status" value="1"/>
</dbReference>
<dbReference type="SMART" id="SM00534">
    <property type="entry name" value="MUTSac"/>
    <property type="match status" value="1"/>
</dbReference>
<dbReference type="SMART" id="SM00533">
    <property type="entry name" value="MUTSd"/>
    <property type="match status" value="1"/>
</dbReference>
<dbReference type="SUPFAM" id="SSF55271">
    <property type="entry name" value="DNA repair protein MutS, domain I"/>
    <property type="match status" value="1"/>
</dbReference>
<dbReference type="SUPFAM" id="SSF53150">
    <property type="entry name" value="DNA repair protein MutS, domain II"/>
    <property type="match status" value="1"/>
</dbReference>
<dbReference type="SUPFAM" id="SSF48334">
    <property type="entry name" value="DNA repair protein MutS, domain III"/>
    <property type="match status" value="1"/>
</dbReference>
<dbReference type="SUPFAM" id="SSF52540">
    <property type="entry name" value="P-loop containing nucleoside triphosphate hydrolases"/>
    <property type="match status" value="1"/>
</dbReference>
<dbReference type="PROSITE" id="PS00486">
    <property type="entry name" value="DNA_MISMATCH_REPAIR_2"/>
    <property type="match status" value="1"/>
</dbReference>
<keyword id="KW-0067">ATP-binding</keyword>
<keyword id="KW-0227">DNA damage</keyword>
<keyword id="KW-0234">DNA repair</keyword>
<keyword id="KW-0238">DNA-binding</keyword>
<keyword id="KW-0547">Nucleotide-binding</keyword>
<sequence length="861" mass="95942">MNVMENLEQHTPMMRQYLALKAENPDILLFYRMGDFYELFYDDAKKAAALLDISLTKRGQSAGQPIPMAGVPYHAVEGYLAKLVQLGESVAICEQIGDPALSKGPVERKIVRIVTPGTVSDENLLPERQDNLIVAVYQEKDKFGLATLDMTSGRFQISEPENAESLKAELQRLAPAELLYCEDFADMQLIEHYKGLRRRPIWEFELSTAVQLLNRQFGTKDLRGFGVEKAILGLCAAGCLLQYAKETQRTALPHIQSITLIQNNENIQLDAATRRNLELTQNLAGGTENTLASVLDKCVTPMGSRLLKRWIHQPIRHIQKLRQRQQIISEIIQLDLIGELQPYLQQVGDMERILARVALRTARPRDLTRLRTALEQIPTIKDILKNSPKFTALFQQIGDFDELFALLQQAIIDNPPLLIRDGGVIAEGYNAELDEWRALSDGATKYLEDLEIRERESTGIDTLKVGFNAVHGYYIQISQGQAHKAPIHYVRRQTLKNAERFIIPELKTYEDKVLKAKGASLALEKQLYDALFDRLLPHLGALQLASLTLSALDVLTNLAERAETLNYVAPDFSDEIGVKIENGRHPVVEQVLKEPFIANPVDLNQQRHLLIITGPNMGGKSTYMRQTALITLMAYIGSFVPAESALIGPIDRIFTRIGASDDLASGRSTFMVEMTEMANILHQAGANSLVLIDEIGRGTSTYDGLSLAWACAEWLAKKLRSLTLFATHYFELTVLPEQLAGTANVHLDALEHGDSIAFMHAVQDGAASKSYGLAVAALAGVPKNVVKLAKQKLANLEKLSQQSADQKLQDLRTINQNQGELNLMEEEDGKNAALEMLAQLDPDDLSPKQALAYLYQLKKLL</sequence>
<organism>
    <name type="scientific">Mannheimia succiniciproducens (strain KCTC 0769BP / MBEL55E)</name>
    <dbReference type="NCBI Taxonomy" id="221988"/>
    <lineage>
        <taxon>Bacteria</taxon>
        <taxon>Pseudomonadati</taxon>
        <taxon>Pseudomonadota</taxon>
        <taxon>Gammaproteobacteria</taxon>
        <taxon>Pasteurellales</taxon>
        <taxon>Pasteurellaceae</taxon>
        <taxon>Basfia</taxon>
    </lineage>
</organism>
<accession>Q65QA9</accession>
<protein>
    <recommendedName>
        <fullName evidence="1">DNA mismatch repair protein MutS</fullName>
    </recommendedName>
</protein>
<gene>
    <name evidence="1" type="primary">mutS</name>
    <name type="ordered locus">MS2244</name>
</gene>